<proteinExistence type="uncertain"/>
<protein>
    <recommendedName>
        <fullName>Putative uncharacterized protein YMR052C-A</fullName>
    </recommendedName>
</protein>
<accession>Q6B0Y6</accession>
<name>YM052_YEAST</name>
<evidence type="ECO:0000255" key="1"/>
<evidence type="ECO:0000305" key="2"/>
<evidence type="ECO:0000305" key="3">
    <source>
    </source>
</evidence>
<gene>
    <name type="ordered locus">YMR052C-A</name>
</gene>
<keyword id="KW-0472">Membrane</keyword>
<keyword id="KW-0812">Transmembrane</keyword>
<keyword id="KW-1133">Transmembrane helix</keyword>
<reference key="1">
    <citation type="journal article" date="1997" name="Nature">
        <title>The nucleotide sequence of Saccharomyces cerevisiae chromosome XIII.</title>
        <authorList>
            <person name="Bowman S."/>
            <person name="Churcher C.M."/>
            <person name="Badcock K."/>
            <person name="Brown D."/>
            <person name="Chillingworth T."/>
            <person name="Connor R."/>
            <person name="Dedman K."/>
            <person name="Devlin K."/>
            <person name="Gentles S."/>
            <person name="Hamlin N."/>
            <person name="Hunt S."/>
            <person name="Jagels K."/>
            <person name="Lye G."/>
            <person name="Moule S."/>
            <person name="Odell C."/>
            <person name="Pearson D."/>
            <person name="Rajandream M.A."/>
            <person name="Rice P."/>
            <person name="Skelton J."/>
            <person name="Walsh S.V."/>
            <person name="Whitehead S."/>
            <person name="Barrell B.G."/>
        </authorList>
    </citation>
    <scope>NUCLEOTIDE SEQUENCE [LARGE SCALE GENOMIC DNA]</scope>
    <source>
        <strain>ATCC 204508 / S288c</strain>
    </source>
</reference>
<reference key="2">
    <citation type="journal article" date="2014" name="G3 (Bethesda)">
        <title>The reference genome sequence of Saccharomyces cerevisiae: Then and now.</title>
        <authorList>
            <person name="Engel S.R."/>
            <person name="Dietrich F.S."/>
            <person name="Fisk D.G."/>
            <person name="Binkley G."/>
            <person name="Balakrishnan R."/>
            <person name="Costanzo M.C."/>
            <person name="Dwight S.S."/>
            <person name="Hitz B.C."/>
            <person name="Karra K."/>
            <person name="Nash R.S."/>
            <person name="Weng S."/>
            <person name="Wong E.D."/>
            <person name="Lloyd P."/>
            <person name="Skrzypek M.S."/>
            <person name="Miyasato S.R."/>
            <person name="Simison M."/>
            <person name="Cherry J.M."/>
        </authorList>
    </citation>
    <scope>GENOME REANNOTATION</scope>
    <source>
        <strain>ATCC 204508 / S288c</strain>
    </source>
</reference>
<reference key="3">
    <citation type="journal article" date="2007" name="Genome Res.">
        <title>Approaching a complete repository of sequence-verified protein-encoding clones for Saccharomyces cerevisiae.</title>
        <authorList>
            <person name="Hu Y."/>
            <person name="Rolfs A."/>
            <person name="Bhullar B."/>
            <person name="Murthy T.V.S."/>
            <person name="Zhu C."/>
            <person name="Berger M.F."/>
            <person name="Camargo A.A."/>
            <person name="Kelley F."/>
            <person name="McCarron S."/>
            <person name="Jepson D."/>
            <person name="Richardson A."/>
            <person name="Raphael J."/>
            <person name="Moreira D."/>
            <person name="Taycher E."/>
            <person name="Zuo D."/>
            <person name="Mohr S."/>
            <person name="Kane M.F."/>
            <person name="Williamson J."/>
            <person name="Simpson A.J.G."/>
            <person name="Bulyk M.L."/>
            <person name="Harlow E."/>
            <person name="Marsischky G."/>
            <person name="Kolodner R.D."/>
            <person name="LaBaer J."/>
        </authorList>
    </citation>
    <scope>NUCLEOTIDE SEQUENCE [GENOMIC DNA]</scope>
    <source>
        <strain>ATCC 204508 / S288c</strain>
    </source>
</reference>
<comment type="subcellular location">
    <subcellularLocation>
        <location evidence="2">Membrane</location>
        <topology evidence="2">Multi-pass membrane protein</topology>
    </subcellularLocation>
</comment>
<comment type="miscellaneous">
    <text evidence="2">Partially overlaps FAR3 and STB2.</text>
</comment>
<comment type="caution">
    <text evidence="3">Product of a dubious gene prediction unlikely to encode a functional protein. Because of that it is not part of the S.cerevisiae S288c complete/reference proteome set.</text>
</comment>
<sequence length="121" mass="14509">MILWGGSGGYLVIILYTIMPVKTIEEYEYDFFRFILIFFFFQKGSKHLSVVISILKYINAFKGLLFHVCLHFCSIHRRLFQYLVRVLQVFQLFFKAAVISGIFRYTIPIHFLQKFFKLFDN</sequence>
<feature type="chain" id="PRO_0000299667" description="Putative uncharacterized protein YMR052C-A">
    <location>
        <begin position="1"/>
        <end position="121"/>
    </location>
</feature>
<feature type="transmembrane region" description="Helical" evidence="1">
    <location>
        <begin position="1"/>
        <end position="21"/>
    </location>
</feature>
<feature type="transmembrane region" description="Helical" evidence="1">
    <location>
        <begin position="55"/>
        <end position="75"/>
    </location>
</feature>
<feature type="transmembrane region" description="Helical" evidence="1">
    <location>
        <begin position="92"/>
        <end position="112"/>
    </location>
</feature>
<dbReference type="EMBL" id="Z49703">
    <property type="status" value="NOT_ANNOTATED_CDS"/>
    <property type="molecule type" value="Genomic_DNA"/>
</dbReference>
<dbReference type="EMBL" id="AY693294">
    <property type="protein sequence ID" value="AAT93313.1"/>
    <property type="molecule type" value="Genomic_DNA"/>
</dbReference>
<dbReference type="IntAct" id="Q6B0Y6">
    <property type="interactions" value="2"/>
</dbReference>
<dbReference type="STRING" id="4932.YMR052C-A"/>
<dbReference type="PaxDb" id="4932-YMR052C-A"/>
<dbReference type="EnsemblFungi" id="YMR052C-A_mRNA">
    <property type="protein sequence ID" value="YMR052C-A"/>
    <property type="gene ID" value="YMR052C-A"/>
</dbReference>
<dbReference type="AGR" id="SGD:S000004655"/>
<dbReference type="SGD" id="S000004655">
    <property type="gene designation" value="YMR052C-A"/>
</dbReference>
<dbReference type="HOGENOM" id="CLU_2039900_0_0_1"/>
<dbReference type="GO" id="GO:0016020">
    <property type="term" value="C:membrane"/>
    <property type="evidence" value="ECO:0007669"/>
    <property type="project" value="UniProtKB-SubCell"/>
</dbReference>
<organism>
    <name type="scientific">Saccharomyces cerevisiae (strain ATCC 204508 / S288c)</name>
    <name type="common">Baker's yeast</name>
    <dbReference type="NCBI Taxonomy" id="559292"/>
    <lineage>
        <taxon>Eukaryota</taxon>
        <taxon>Fungi</taxon>
        <taxon>Dikarya</taxon>
        <taxon>Ascomycota</taxon>
        <taxon>Saccharomycotina</taxon>
        <taxon>Saccharomycetes</taxon>
        <taxon>Saccharomycetales</taxon>
        <taxon>Saccharomycetaceae</taxon>
        <taxon>Saccharomyces</taxon>
    </lineage>
</organism>